<organism>
    <name type="scientific">Haemophilus influenzae (strain ATCC 51907 / DSM 11121 / KW20 / Rd)</name>
    <dbReference type="NCBI Taxonomy" id="71421"/>
    <lineage>
        <taxon>Bacteria</taxon>
        <taxon>Pseudomonadati</taxon>
        <taxon>Pseudomonadota</taxon>
        <taxon>Gammaproteobacteria</taxon>
        <taxon>Pasteurellales</taxon>
        <taxon>Pasteurellaceae</taxon>
        <taxon>Haemophilus</taxon>
    </lineage>
</organism>
<evidence type="ECO:0000250" key="1"/>
<evidence type="ECO:0000250" key="2">
    <source>
        <dbReference type="UniProtKB" id="Q9K0U9"/>
    </source>
</evidence>
<evidence type="ECO:0000255" key="3"/>
<evidence type="ECO:0000255" key="4">
    <source>
        <dbReference type="PROSITE-ProRule" id="PRU01360"/>
    </source>
</evidence>
<evidence type="ECO:0000303" key="5">
    <source>
    </source>
</evidence>
<evidence type="ECO:0000305" key="6"/>
<gene>
    <name evidence="6" type="primary">tbpA</name>
    <name evidence="5" type="synonym">tbp1</name>
    <name type="ordered locus">HI_0994</name>
</gene>
<reference key="1">
    <citation type="journal article" date="1995" name="Science">
        <title>Whole-genome random sequencing and assembly of Haemophilus influenzae Rd.</title>
        <authorList>
            <person name="Fleischmann R.D."/>
            <person name="Adams M.D."/>
            <person name="White O."/>
            <person name="Clayton R.A."/>
            <person name="Kirkness E.F."/>
            <person name="Kerlavage A.R."/>
            <person name="Bult C.J."/>
            <person name="Tomb J.-F."/>
            <person name="Dougherty B.A."/>
            <person name="Merrick J.M."/>
            <person name="McKenney K."/>
            <person name="Sutton G.G."/>
            <person name="FitzHugh W."/>
            <person name="Fields C.A."/>
            <person name="Gocayne J.D."/>
            <person name="Scott J.D."/>
            <person name="Shirley R."/>
            <person name="Liu L.-I."/>
            <person name="Glodek A."/>
            <person name="Kelley J.M."/>
            <person name="Weidman J.F."/>
            <person name="Phillips C.A."/>
            <person name="Spriggs T."/>
            <person name="Hedblom E."/>
            <person name="Cotton M.D."/>
            <person name="Utterback T.R."/>
            <person name="Hanna M.C."/>
            <person name="Nguyen D.T."/>
            <person name="Saudek D.M."/>
            <person name="Brandon R.C."/>
            <person name="Fine L.D."/>
            <person name="Fritchman J.L."/>
            <person name="Fuhrmann J.L."/>
            <person name="Geoghagen N.S.M."/>
            <person name="Gnehm C.L."/>
            <person name="McDonald L.A."/>
            <person name="Small K.V."/>
            <person name="Fraser C.M."/>
            <person name="Smith H.O."/>
            <person name="Venter J.C."/>
        </authorList>
    </citation>
    <scope>NUCLEOTIDE SEQUENCE [LARGE SCALE GENOMIC DNA]</scope>
    <source>
        <strain>ATCC 51907 / DSM 11121 / KW20 / Rd</strain>
    </source>
</reference>
<feature type="signal peptide" evidence="3">
    <location>
        <begin position="1"/>
        <end position="23"/>
    </location>
</feature>
<feature type="chain" id="PRO_0000034776" description="Transferrin-binding protein A">
    <location>
        <begin position="24"/>
        <end position="912"/>
    </location>
</feature>
<feature type="domain" description="TBDR plug" evidence="4">
    <location>
        <begin position="63"/>
        <end position="188"/>
    </location>
</feature>
<feature type="domain" description="TBDR beta-barrel" evidence="4">
    <location>
        <begin position="199"/>
        <end position="912"/>
    </location>
</feature>
<feature type="short sequence motif" description="TonB box">
    <location>
        <begin position="50"/>
        <end position="57"/>
    </location>
</feature>
<feature type="short sequence motif" description="TonB C-terminal box">
    <location>
        <begin position="895"/>
        <end position="912"/>
    </location>
</feature>
<dbReference type="EMBL" id="L42023">
    <property type="protein sequence ID" value="AAC22656.1"/>
    <property type="molecule type" value="Genomic_DNA"/>
</dbReference>
<dbReference type="PIR" id="C64107">
    <property type="entry name" value="C64107"/>
</dbReference>
<dbReference type="RefSeq" id="NP_439157.1">
    <property type="nucleotide sequence ID" value="NC_000907.1"/>
</dbReference>
<dbReference type="SMR" id="P44970"/>
<dbReference type="STRING" id="71421.HI_0994"/>
<dbReference type="TCDB" id="1.B.14.2.12">
    <property type="family name" value="the outer membrane receptor (omr) family"/>
</dbReference>
<dbReference type="EnsemblBacteria" id="AAC22656">
    <property type="protein sequence ID" value="AAC22656"/>
    <property type="gene ID" value="HI_0994"/>
</dbReference>
<dbReference type="KEGG" id="hin:HI_0994"/>
<dbReference type="PATRIC" id="fig|71421.8.peg.1037"/>
<dbReference type="eggNOG" id="COG1629">
    <property type="taxonomic scope" value="Bacteria"/>
</dbReference>
<dbReference type="eggNOG" id="COG4771">
    <property type="taxonomic scope" value="Bacteria"/>
</dbReference>
<dbReference type="HOGENOM" id="CLU_008287_19_0_6"/>
<dbReference type="OrthoDB" id="9764669at2"/>
<dbReference type="PhylomeDB" id="P44970"/>
<dbReference type="BioCyc" id="HINF71421:G1GJ1-1036-MONOMER"/>
<dbReference type="Proteomes" id="UP000000579">
    <property type="component" value="Chromosome"/>
</dbReference>
<dbReference type="GO" id="GO:0009279">
    <property type="term" value="C:cell outer membrane"/>
    <property type="evidence" value="ECO:0000318"/>
    <property type="project" value="GO_Central"/>
</dbReference>
<dbReference type="GO" id="GO:0015091">
    <property type="term" value="F:ferric iron transmembrane transporter activity"/>
    <property type="evidence" value="ECO:0007669"/>
    <property type="project" value="InterPro"/>
</dbReference>
<dbReference type="GO" id="GO:0015344">
    <property type="term" value="F:siderophore uptake transmembrane transporter activity"/>
    <property type="evidence" value="ECO:0000318"/>
    <property type="project" value="GO_Central"/>
</dbReference>
<dbReference type="GO" id="GO:0044718">
    <property type="term" value="P:siderophore transmembrane transport"/>
    <property type="evidence" value="ECO:0000318"/>
    <property type="project" value="GO_Central"/>
</dbReference>
<dbReference type="CDD" id="cd01347">
    <property type="entry name" value="ligand_gated_channel"/>
    <property type="match status" value="1"/>
</dbReference>
<dbReference type="Gene3D" id="2.40.170.20">
    <property type="entry name" value="TonB-dependent receptor, beta-barrel domain"/>
    <property type="match status" value="1"/>
</dbReference>
<dbReference type="Gene3D" id="2.170.130.10">
    <property type="entry name" value="TonB-dependent receptor, plug domain"/>
    <property type="match status" value="1"/>
</dbReference>
<dbReference type="InterPro" id="IPR012910">
    <property type="entry name" value="Plug_dom"/>
</dbReference>
<dbReference type="InterPro" id="IPR037066">
    <property type="entry name" value="Plug_dom_sf"/>
</dbReference>
<dbReference type="InterPro" id="IPR039426">
    <property type="entry name" value="TonB-dep_rcpt-like"/>
</dbReference>
<dbReference type="InterPro" id="IPR000531">
    <property type="entry name" value="TonB-dep_rcpt_b-brl"/>
</dbReference>
<dbReference type="InterPro" id="IPR010916">
    <property type="entry name" value="TonB_box_CS"/>
</dbReference>
<dbReference type="InterPro" id="IPR010949">
    <property type="entry name" value="TonB_Hb/transfer/lactofer_rcpt"/>
</dbReference>
<dbReference type="InterPro" id="IPR010948">
    <property type="entry name" value="TonB_lacto/transferrin_rcpt"/>
</dbReference>
<dbReference type="InterPro" id="IPR036942">
    <property type="entry name" value="TonB_rcpt_b-brl_sf"/>
</dbReference>
<dbReference type="InterPro" id="IPR010917">
    <property type="entry name" value="TonB_rcpt_CS"/>
</dbReference>
<dbReference type="NCBIfam" id="TIGR01786">
    <property type="entry name" value="TonB-hemlactrns"/>
    <property type="match status" value="1"/>
</dbReference>
<dbReference type="NCBIfam" id="TIGR01776">
    <property type="entry name" value="TonB-tbp-lbp"/>
    <property type="match status" value="1"/>
</dbReference>
<dbReference type="PANTHER" id="PTHR30069">
    <property type="entry name" value="TONB-DEPENDENT OUTER MEMBRANE RECEPTOR"/>
    <property type="match status" value="1"/>
</dbReference>
<dbReference type="PANTHER" id="PTHR30069:SF54">
    <property type="entry name" value="TRANSFERRIN-BINDING PROTEIN A"/>
    <property type="match status" value="1"/>
</dbReference>
<dbReference type="Pfam" id="PF07715">
    <property type="entry name" value="Plug"/>
    <property type="match status" value="1"/>
</dbReference>
<dbReference type="Pfam" id="PF00593">
    <property type="entry name" value="TonB_dep_Rec_b-barrel"/>
    <property type="match status" value="1"/>
</dbReference>
<dbReference type="SUPFAM" id="SSF56935">
    <property type="entry name" value="Porins"/>
    <property type="match status" value="1"/>
</dbReference>
<dbReference type="PROSITE" id="PS00430">
    <property type="entry name" value="TONB_DEPENDENT_REC_1"/>
    <property type="match status" value="1"/>
</dbReference>
<dbReference type="PROSITE" id="PS01156">
    <property type="entry name" value="TONB_DEPENDENT_REC_2"/>
    <property type="match status" value="1"/>
</dbReference>
<dbReference type="PROSITE" id="PS52016">
    <property type="entry name" value="TONB_DEPENDENT_REC_3"/>
    <property type="match status" value="1"/>
</dbReference>
<protein>
    <recommendedName>
        <fullName evidence="6">Transferrin-binding protein A</fullName>
        <shortName evidence="6">TbpA</shortName>
    </recommendedName>
    <alternativeName>
        <fullName>Transferrin-binding protein 1</fullName>
    </alternativeName>
</protein>
<name>TBPA_HAEIN</name>
<proteinExistence type="inferred from homology"/>
<sequence>MTKKPYFRLSIISCLLISCYVKAETQSIKDTKEAISSEVDTQSTEDSELETISVTAEKVRDRKDNEVTGLGKIIKTSESISREQVLNIRDLTRYDPGISVVEQGRGASSGYSIRGMDRNRVALLVDGLPQTQSYVVQSPLVARSGYSGTGAINEIEYENVKAVEISKGGSSSEYGNGALAGSVTFQSKSAADILEGDKSWGIQTKNAYSSKNKGFTHSLAVAGKQGGFEGLAIYTQRNSIETQVHKDALKGVQSYNRLIAKPENQSAYFVMEDECPKGYDECIPSAKPPAILSTKKETVSVSDYTGANRIKPNPMKYESQSWFLRGGYHFSEQHYIGGIFEFTQQKFDIRDMTFPAYLSPTEKGDLANRPFYPKQDYGAYQHIEDGRGVKYASGLYFDEHHRKQRVGIEYIYENKNKAGIIDKAVLSANQQNIILDSYMRHTHCSLYPNPSKNCRPTLDKPYSYYRSDRNVYKEKHNMLQLNLEKKIQQNWLTHQIVFNLGFDDFTSALQHKDYLTRRVIATADSISDKTGKTRRNGLREYPYLYPKPKPYFAGEDHCNYQGSSSNYRDCKVRLIKGKNYYFAARNNMALGKYVDLGLGIRYDVSRTKANESTISVGKFKNFSWNTGIVIKPTEWLDLSYRLSTGFRNPSFAEMYGWRYGGKNDEVYVGKFKPETSRNQEFGLALKGDFGNIEISHFSNAYRNLIAFAEELSKNGTGKGNYGYHNAQNAKLVGVNITAQLDFNGLWKRIPYGWYATFAYNRVKVKDQKINAGLASVSSYLFDAIQPSRYIIGLGYDHISNTWGVNATFTQSKAKSQNELLGKRALGNNSRDVKSTRKLTRAWHILDVSGYYMANKNIMLRLGIYNLFNYRYVTWEAVRQTAQGAVNQHQNVGNYTRYAASGRNYTLTLEMKF</sequence>
<accession>P44970</accession>
<comment type="function">
    <text evidence="1">Haemophilus acquires iron by extracting it from serum transferrin (TF) in its human host. Acts as a transferrin receptor and is required for transferrin utilization.</text>
</comment>
<comment type="subcellular location">
    <subcellularLocation>
        <location evidence="4 6">Cell outer membrane</location>
        <topology evidence="2 4">Multi-pass membrane protein</topology>
    </subcellularLocation>
</comment>
<comment type="similarity">
    <text evidence="6">Belongs to the TonB-dependent receptor family.</text>
</comment>
<keyword id="KW-0998">Cell outer membrane</keyword>
<keyword id="KW-0472">Membrane</keyword>
<keyword id="KW-0675">Receptor</keyword>
<keyword id="KW-1185">Reference proteome</keyword>
<keyword id="KW-0732">Signal</keyword>
<keyword id="KW-0798">TonB box</keyword>
<keyword id="KW-0812">Transmembrane</keyword>
<keyword id="KW-1134">Transmembrane beta strand</keyword>
<keyword id="KW-0813">Transport</keyword>
<keyword id="KW-0843">Virulence</keyword>